<feature type="chain" id="PRO_0000112807" description="Acetylornithine aminotransferase">
    <location>
        <begin position="1"/>
        <end position="393"/>
    </location>
</feature>
<feature type="binding site" evidence="1">
    <location>
        <begin position="100"/>
        <end position="101"/>
    </location>
    <ligand>
        <name>pyridoxal 5'-phosphate</name>
        <dbReference type="ChEBI" id="CHEBI:597326"/>
    </ligand>
</feature>
<feature type="binding site" evidence="1">
    <location>
        <position position="133"/>
    </location>
    <ligand>
        <name>pyridoxal 5'-phosphate</name>
        <dbReference type="ChEBI" id="CHEBI:597326"/>
    </ligand>
</feature>
<feature type="binding site" evidence="1">
    <location>
        <position position="136"/>
    </location>
    <ligand>
        <name>N(2)-acetyl-L-ornithine</name>
        <dbReference type="ChEBI" id="CHEBI:57805"/>
    </ligand>
</feature>
<feature type="binding site" evidence="1">
    <location>
        <begin position="218"/>
        <end position="221"/>
    </location>
    <ligand>
        <name>pyridoxal 5'-phosphate</name>
        <dbReference type="ChEBI" id="CHEBI:597326"/>
    </ligand>
</feature>
<feature type="binding site" evidence="1">
    <location>
        <position position="274"/>
    </location>
    <ligand>
        <name>N(2)-acetyl-L-ornithine</name>
        <dbReference type="ChEBI" id="CHEBI:57805"/>
    </ligand>
</feature>
<feature type="binding site" evidence="1">
    <location>
        <position position="275"/>
    </location>
    <ligand>
        <name>pyridoxal 5'-phosphate</name>
        <dbReference type="ChEBI" id="CHEBI:597326"/>
    </ligand>
</feature>
<feature type="modified residue" description="N6-(pyridoxal phosphate)lysine" evidence="1">
    <location>
        <position position="247"/>
    </location>
</feature>
<protein>
    <recommendedName>
        <fullName evidence="1">Acetylornithine aminotransferase</fullName>
        <shortName evidence="1">ACOAT</shortName>
        <ecNumber evidence="1">2.6.1.11</ecNumber>
    </recommendedName>
</protein>
<reference key="1">
    <citation type="journal article" date="2002" name="Genome Res.">
        <title>A complete sequence of the T. tengcongensis genome.</title>
        <authorList>
            <person name="Bao Q."/>
            <person name="Tian Y."/>
            <person name="Li W."/>
            <person name="Xu Z."/>
            <person name="Xuan Z."/>
            <person name="Hu S."/>
            <person name="Dong W."/>
            <person name="Yang J."/>
            <person name="Chen Y."/>
            <person name="Xue Y."/>
            <person name="Xu Y."/>
            <person name="Lai X."/>
            <person name="Huang L."/>
            <person name="Dong X."/>
            <person name="Ma Y."/>
            <person name="Ling L."/>
            <person name="Tan H."/>
            <person name="Chen R."/>
            <person name="Wang J."/>
            <person name="Yu J."/>
            <person name="Yang H."/>
        </authorList>
    </citation>
    <scope>NUCLEOTIDE SEQUENCE [LARGE SCALE GENOMIC DNA]</scope>
    <source>
        <strain>DSM 15242 / JCM 11007 / NBRC 100824 / MB4</strain>
    </source>
</reference>
<comment type="catalytic activity">
    <reaction evidence="1">
        <text>N(2)-acetyl-L-ornithine + 2-oxoglutarate = N-acetyl-L-glutamate 5-semialdehyde + L-glutamate</text>
        <dbReference type="Rhea" id="RHEA:18049"/>
        <dbReference type="ChEBI" id="CHEBI:16810"/>
        <dbReference type="ChEBI" id="CHEBI:29123"/>
        <dbReference type="ChEBI" id="CHEBI:29985"/>
        <dbReference type="ChEBI" id="CHEBI:57805"/>
        <dbReference type="EC" id="2.6.1.11"/>
    </reaction>
</comment>
<comment type="cofactor">
    <cofactor evidence="1">
        <name>pyridoxal 5'-phosphate</name>
        <dbReference type="ChEBI" id="CHEBI:597326"/>
    </cofactor>
    <text evidence="1">Binds 1 pyridoxal phosphate per subunit.</text>
</comment>
<comment type="pathway">
    <text evidence="1">Amino-acid biosynthesis; L-arginine biosynthesis; N(2)-acetyl-L-ornithine from L-glutamate: step 4/4.</text>
</comment>
<comment type="subunit">
    <text evidence="1">Homodimer.</text>
</comment>
<comment type="subcellular location">
    <subcellularLocation>
        <location evidence="1">Cytoplasm</location>
    </subcellularLocation>
</comment>
<comment type="miscellaneous">
    <text evidence="1">May also have succinyldiaminopimelate aminotransferase activity, thus carrying out the corresponding step in lysine biosynthesis.</text>
</comment>
<comment type="similarity">
    <text evidence="1">Belongs to the class-III pyridoxal-phosphate-dependent aminotransferase family. ArgD subfamily.</text>
</comment>
<organism>
    <name type="scientific">Caldanaerobacter subterraneus subsp. tengcongensis (strain DSM 15242 / JCM 11007 / NBRC 100824 / MB4)</name>
    <name type="common">Thermoanaerobacter tengcongensis</name>
    <dbReference type="NCBI Taxonomy" id="273068"/>
    <lineage>
        <taxon>Bacteria</taxon>
        <taxon>Bacillati</taxon>
        <taxon>Bacillota</taxon>
        <taxon>Clostridia</taxon>
        <taxon>Thermoanaerobacterales</taxon>
        <taxon>Thermoanaerobacteraceae</taxon>
        <taxon>Caldanaerobacter</taxon>
    </lineage>
</organism>
<gene>
    <name evidence="1" type="primary">argD</name>
    <name type="ordered locus">TTE2495</name>
</gene>
<proteinExistence type="inferred from homology"/>
<evidence type="ECO:0000255" key="1">
    <source>
        <dbReference type="HAMAP-Rule" id="MF_01107"/>
    </source>
</evidence>
<name>ARGD_CALS4</name>
<sequence>MITYEKKYLMDTYNRYPIMLVKGEGTRVWDSEGNAYLDFVAGIAVNSLGHCHPALVEAIKKQAETLIHCSNLYWNEKQIELARMISENSFGGKVFFANSGAEANEGAIKLARKYASLKYGGKRYKIITAKNSFHGRTFGALTATGQEKYHKGFGPLLAGFKYVPLNDIEALYEAVDDEVCAIMLEVIQGEGGIHEATPEYVKAVRKICDENDLLFILDEVQTGIGRTGKLFGYEHYGVVPDIMTLAKGLGGGFPIGAIVAKEDKAVFKPGDHASTFGGNPLACAAGIAVLNEVTKDGFLEGVDKKGKYFREGLETLQKKHKVVKEIRGKGLMVGCEVDLEDASEIVLKALEKGLLINSVSHNVLRFVPPLIVTEEEIDEALQILDDVLSEIRF</sequence>
<dbReference type="EC" id="2.6.1.11" evidence="1"/>
<dbReference type="EMBL" id="AE008691">
    <property type="protein sequence ID" value="AAM25625.1"/>
    <property type="molecule type" value="Genomic_DNA"/>
</dbReference>
<dbReference type="RefSeq" id="WP_011026509.1">
    <property type="nucleotide sequence ID" value="NC_003869.1"/>
</dbReference>
<dbReference type="SMR" id="Q8R7C1"/>
<dbReference type="STRING" id="273068.TTE2495"/>
<dbReference type="KEGG" id="tte:TTE2495"/>
<dbReference type="eggNOG" id="COG4992">
    <property type="taxonomic scope" value="Bacteria"/>
</dbReference>
<dbReference type="HOGENOM" id="CLU_016922_10_1_9"/>
<dbReference type="OrthoDB" id="9801052at2"/>
<dbReference type="UniPathway" id="UPA00068">
    <property type="reaction ID" value="UER00109"/>
</dbReference>
<dbReference type="Proteomes" id="UP000000555">
    <property type="component" value="Chromosome"/>
</dbReference>
<dbReference type="GO" id="GO:0005737">
    <property type="term" value="C:cytoplasm"/>
    <property type="evidence" value="ECO:0007669"/>
    <property type="project" value="UniProtKB-SubCell"/>
</dbReference>
<dbReference type="GO" id="GO:0042802">
    <property type="term" value="F:identical protein binding"/>
    <property type="evidence" value="ECO:0007669"/>
    <property type="project" value="TreeGrafter"/>
</dbReference>
<dbReference type="GO" id="GO:0003992">
    <property type="term" value="F:N2-acetyl-L-ornithine:2-oxoglutarate 5-aminotransferase activity"/>
    <property type="evidence" value="ECO:0007669"/>
    <property type="project" value="UniProtKB-UniRule"/>
</dbReference>
<dbReference type="GO" id="GO:0030170">
    <property type="term" value="F:pyridoxal phosphate binding"/>
    <property type="evidence" value="ECO:0007669"/>
    <property type="project" value="InterPro"/>
</dbReference>
<dbReference type="GO" id="GO:0006526">
    <property type="term" value="P:L-arginine biosynthetic process"/>
    <property type="evidence" value="ECO:0007669"/>
    <property type="project" value="UniProtKB-UniRule"/>
</dbReference>
<dbReference type="CDD" id="cd00610">
    <property type="entry name" value="OAT_like"/>
    <property type="match status" value="1"/>
</dbReference>
<dbReference type="FunFam" id="3.40.640.10:FF:000004">
    <property type="entry name" value="Acetylornithine aminotransferase"/>
    <property type="match status" value="1"/>
</dbReference>
<dbReference type="Gene3D" id="3.90.1150.10">
    <property type="entry name" value="Aspartate Aminotransferase, domain 1"/>
    <property type="match status" value="1"/>
</dbReference>
<dbReference type="Gene3D" id="3.40.640.10">
    <property type="entry name" value="Type I PLP-dependent aspartate aminotransferase-like (Major domain)"/>
    <property type="match status" value="1"/>
</dbReference>
<dbReference type="HAMAP" id="MF_01107">
    <property type="entry name" value="ArgD_aminotrans_3"/>
    <property type="match status" value="1"/>
</dbReference>
<dbReference type="InterPro" id="IPR004636">
    <property type="entry name" value="AcOrn/SuccOrn_fam"/>
</dbReference>
<dbReference type="InterPro" id="IPR005814">
    <property type="entry name" value="Aminotrans_3"/>
</dbReference>
<dbReference type="InterPro" id="IPR049704">
    <property type="entry name" value="Aminotrans_3_PPA_site"/>
</dbReference>
<dbReference type="InterPro" id="IPR050103">
    <property type="entry name" value="Class-III_PLP-dep_AT"/>
</dbReference>
<dbReference type="InterPro" id="IPR015424">
    <property type="entry name" value="PyrdxlP-dep_Trfase"/>
</dbReference>
<dbReference type="InterPro" id="IPR015421">
    <property type="entry name" value="PyrdxlP-dep_Trfase_major"/>
</dbReference>
<dbReference type="InterPro" id="IPR015422">
    <property type="entry name" value="PyrdxlP-dep_Trfase_small"/>
</dbReference>
<dbReference type="NCBIfam" id="TIGR00707">
    <property type="entry name" value="argD"/>
    <property type="match status" value="1"/>
</dbReference>
<dbReference type="NCBIfam" id="NF002325">
    <property type="entry name" value="PRK01278.1"/>
    <property type="match status" value="1"/>
</dbReference>
<dbReference type="NCBIfam" id="NF002874">
    <property type="entry name" value="PRK03244.1"/>
    <property type="match status" value="1"/>
</dbReference>
<dbReference type="PANTHER" id="PTHR11986:SF79">
    <property type="entry name" value="ACETYLORNITHINE AMINOTRANSFERASE, MITOCHONDRIAL"/>
    <property type="match status" value="1"/>
</dbReference>
<dbReference type="PANTHER" id="PTHR11986">
    <property type="entry name" value="AMINOTRANSFERASE CLASS III"/>
    <property type="match status" value="1"/>
</dbReference>
<dbReference type="Pfam" id="PF00202">
    <property type="entry name" value="Aminotran_3"/>
    <property type="match status" value="1"/>
</dbReference>
<dbReference type="PIRSF" id="PIRSF000521">
    <property type="entry name" value="Transaminase_4ab_Lys_Orn"/>
    <property type="match status" value="1"/>
</dbReference>
<dbReference type="SUPFAM" id="SSF53383">
    <property type="entry name" value="PLP-dependent transferases"/>
    <property type="match status" value="1"/>
</dbReference>
<dbReference type="PROSITE" id="PS00600">
    <property type="entry name" value="AA_TRANSFER_CLASS_3"/>
    <property type="match status" value="1"/>
</dbReference>
<accession>Q8R7C1</accession>
<keyword id="KW-0028">Amino-acid biosynthesis</keyword>
<keyword id="KW-0032">Aminotransferase</keyword>
<keyword id="KW-0055">Arginine biosynthesis</keyword>
<keyword id="KW-0963">Cytoplasm</keyword>
<keyword id="KW-0663">Pyridoxal phosphate</keyword>
<keyword id="KW-1185">Reference proteome</keyword>
<keyword id="KW-0808">Transferase</keyword>